<name>TPMT_PSESJ</name>
<dbReference type="EC" id="2.1.1.67" evidence="1"/>
<dbReference type="EMBL" id="L49178">
    <property type="protein sequence ID" value="AAC27664.1"/>
    <property type="molecule type" value="Genomic_DNA"/>
</dbReference>
<dbReference type="PDB" id="1PJZ">
    <property type="method" value="NMR"/>
    <property type="chains" value="A=18-218"/>
</dbReference>
<dbReference type="PDBsum" id="1PJZ"/>
<dbReference type="BMRB" id="O86262"/>
<dbReference type="SMR" id="O86262"/>
<dbReference type="EvolutionaryTrace" id="O86262"/>
<dbReference type="GO" id="GO:0005737">
    <property type="term" value="C:cytoplasm"/>
    <property type="evidence" value="ECO:0007669"/>
    <property type="project" value="UniProtKB-SubCell"/>
</dbReference>
<dbReference type="GO" id="GO:0008119">
    <property type="term" value="F:thiopurine S-methyltransferase activity"/>
    <property type="evidence" value="ECO:0007669"/>
    <property type="project" value="UniProtKB-UniRule"/>
</dbReference>
<dbReference type="GO" id="GO:0032259">
    <property type="term" value="P:methylation"/>
    <property type="evidence" value="ECO:0007669"/>
    <property type="project" value="UniProtKB-KW"/>
</dbReference>
<dbReference type="GO" id="GO:0010038">
    <property type="term" value="P:response to metal ion"/>
    <property type="evidence" value="ECO:0007669"/>
    <property type="project" value="InterPro"/>
</dbReference>
<dbReference type="GO" id="GO:0046690">
    <property type="term" value="P:response to tellurium ion"/>
    <property type="evidence" value="ECO:0007669"/>
    <property type="project" value="UniProtKB-KW"/>
</dbReference>
<dbReference type="FunFam" id="3.40.50.150:FF:000101">
    <property type="entry name" value="Thiopurine S-methyltransferase"/>
    <property type="match status" value="1"/>
</dbReference>
<dbReference type="Gene3D" id="3.40.50.150">
    <property type="entry name" value="Vaccinia Virus protein VP39"/>
    <property type="match status" value="1"/>
</dbReference>
<dbReference type="HAMAP" id="MF_00812">
    <property type="entry name" value="Thiopur_methtran"/>
    <property type="match status" value="1"/>
</dbReference>
<dbReference type="InterPro" id="IPR029063">
    <property type="entry name" value="SAM-dependent_MTases_sf"/>
</dbReference>
<dbReference type="InterPro" id="IPR022474">
    <property type="entry name" value="Thiopur_S-MeTfrase_Se/Te_detox"/>
</dbReference>
<dbReference type="InterPro" id="IPR025835">
    <property type="entry name" value="Thiopurine_S-MeTrfase"/>
</dbReference>
<dbReference type="InterPro" id="IPR008854">
    <property type="entry name" value="TPMT"/>
</dbReference>
<dbReference type="NCBIfam" id="NF009732">
    <property type="entry name" value="PRK13255.1"/>
    <property type="match status" value="1"/>
</dbReference>
<dbReference type="NCBIfam" id="TIGR03840">
    <property type="entry name" value="TMPT_Se_Te"/>
    <property type="match status" value="1"/>
</dbReference>
<dbReference type="PANTHER" id="PTHR10259">
    <property type="entry name" value="THIOPURINE S-METHYLTRANSFERASE"/>
    <property type="match status" value="1"/>
</dbReference>
<dbReference type="PANTHER" id="PTHR10259:SF11">
    <property type="entry name" value="THIOPURINE S-METHYLTRANSFERASE"/>
    <property type="match status" value="1"/>
</dbReference>
<dbReference type="Pfam" id="PF05724">
    <property type="entry name" value="TPMT"/>
    <property type="match status" value="1"/>
</dbReference>
<dbReference type="PIRSF" id="PIRSF023956">
    <property type="entry name" value="Thiopurine_S-methyltransferase"/>
    <property type="match status" value="1"/>
</dbReference>
<dbReference type="SUPFAM" id="SSF53335">
    <property type="entry name" value="S-adenosyl-L-methionine-dependent methyltransferases"/>
    <property type="match status" value="1"/>
</dbReference>
<dbReference type="PROSITE" id="PS51585">
    <property type="entry name" value="SAM_MT_TPMT"/>
    <property type="match status" value="1"/>
</dbReference>
<protein>
    <recommendedName>
        <fullName evidence="1">Thiopurine S-methyltransferase</fullName>
        <ecNumber evidence="1">2.1.1.67</ecNumber>
    </recommendedName>
    <alternativeName>
        <fullName>Tellurite-resistance determinant</fullName>
        <shortName>TEL-R determinant</shortName>
    </alternativeName>
    <alternativeName>
        <fullName evidence="1">Thiopurine methyltransferase</fullName>
    </alternativeName>
</protein>
<organism>
    <name type="scientific">Pseudomonas syringae pv. pisi</name>
    <dbReference type="NCBI Taxonomy" id="59510"/>
    <lineage>
        <taxon>Bacteria</taxon>
        <taxon>Pseudomonadati</taxon>
        <taxon>Pseudomonadota</taxon>
        <taxon>Gammaproteobacteria</taxon>
        <taxon>Pseudomonadales</taxon>
        <taxon>Pseudomonadaceae</taxon>
        <taxon>Pseudomonas</taxon>
        <taxon>Pseudomonas syringae</taxon>
    </lineage>
</organism>
<accession>O86262</accession>
<comment type="function">
    <text>Involved in the biological cycling of tellurium and selenium. Tellurium resistance (Ter) mechanism.</text>
</comment>
<comment type="catalytic activity">
    <reaction evidence="1">
        <text>S-adenosyl-L-methionine + a thiopurine = S-adenosyl-L-homocysteine + a thiopurine S-methylether.</text>
        <dbReference type="EC" id="2.1.1.67"/>
    </reaction>
</comment>
<comment type="subcellular location">
    <subcellularLocation>
        <location>Cytoplasm</location>
    </subcellularLocation>
</comment>
<comment type="similarity">
    <text evidence="1">Belongs to the class I-like SAM-binding methyltransferase superfamily. TPMT family.</text>
</comment>
<gene>
    <name evidence="1" type="primary">tpm</name>
</gene>
<keyword id="KW-0002">3D-structure</keyword>
<keyword id="KW-0963">Cytoplasm</keyword>
<keyword id="KW-0489">Methyltransferase</keyword>
<keyword id="KW-0949">S-adenosyl-L-methionine</keyword>
<keyword id="KW-0778">Tellurium resistance</keyword>
<keyword id="KW-0808">Transferase</keyword>
<proteinExistence type="evidence at protein level"/>
<evidence type="ECO:0000255" key="1">
    <source>
        <dbReference type="HAMAP-Rule" id="MF_00812"/>
    </source>
</evidence>
<evidence type="ECO:0007829" key="2">
    <source>
        <dbReference type="PDB" id="1PJZ"/>
    </source>
</evidence>
<feature type="chain" id="PRO_0000220129" description="Thiopurine S-methyltransferase">
    <location>
        <begin position="1"/>
        <end position="218"/>
    </location>
</feature>
<feature type="binding site" evidence="1">
    <location>
        <position position="10"/>
    </location>
    <ligand>
        <name>S-adenosyl-L-methionine</name>
        <dbReference type="ChEBI" id="CHEBI:59789"/>
    </ligand>
</feature>
<feature type="binding site" evidence="1">
    <location>
        <position position="45"/>
    </location>
    <ligand>
        <name>S-adenosyl-L-methionine</name>
        <dbReference type="ChEBI" id="CHEBI:59789"/>
    </ligand>
</feature>
<feature type="binding site" evidence="1">
    <location>
        <position position="66"/>
    </location>
    <ligand>
        <name>S-adenosyl-L-methionine</name>
        <dbReference type="ChEBI" id="CHEBI:59789"/>
    </ligand>
</feature>
<feature type="binding site" evidence="1">
    <location>
        <position position="123"/>
    </location>
    <ligand>
        <name>S-adenosyl-L-methionine</name>
        <dbReference type="ChEBI" id="CHEBI:59789"/>
    </ligand>
</feature>
<feature type="strand" evidence="2">
    <location>
        <begin position="20"/>
        <end position="22"/>
    </location>
</feature>
<feature type="helix" evidence="2">
    <location>
        <begin position="24"/>
        <end position="33"/>
    </location>
</feature>
<feature type="strand" evidence="2">
    <location>
        <begin position="40"/>
        <end position="43"/>
    </location>
</feature>
<feature type="turn" evidence="2">
    <location>
        <begin position="44"/>
        <end position="46"/>
    </location>
</feature>
<feature type="helix" evidence="2">
    <location>
        <begin position="50"/>
        <end position="58"/>
    </location>
</feature>
<feature type="strand" evidence="2">
    <location>
        <begin position="61"/>
        <end position="67"/>
    </location>
</feature>
<feature type="helix" evidence="2">
    <location>
        <begin position="69"/>
        <end position="79"/>
    </location>
</feature>
<feature type="strand" evidence="2">
    <location>
        <begin position="83"/>
        <end position="88"/>
    </location>
</feature>
<feature type="strand" evidence="2">
    <location>
        <begin position="91"/>
        <end position="95"/>
    </location>
</feature>
<feature type="strand" evidence="2">
    <location>
        <begin position="97"/>
        <end position="104"/>
    </location>
</feature>
<feature type="strand" evidence="2">
    <location>
        <begin position="107"/>
        <end position="109"/>
    </location>
</feature>
<feature type="helix" evidence="2">
    <location>
        <begin position="111"/>
        <end position="115"/>
    </location>
</feature>
<feature type="strand" evidence="2">
    <location>
        <begin position="116"/>
        <end position="124"/>
    </location>
</feature>
<feature type="helix" evidence="2">
    <location>
        <begin position="126"/>
        <end position="128"/>
    </location>
</feature>
<feature type="helix" evidence="2">
    <location>
        <begin position="131"/>
        <end position="144"/>
    </location>
</feature>
<feature type="strand" evidence="2">
    <location>
        <begin position="147"/>
        <end position="158"/>
    </location>
</feature>
<feature type="strand" evidence="2">
    <location>
        <begin position="160"/>
        <end position="165"/>
    </location>
</feature>
<feature type="helix" evidence="2">
    <location>
        <begin position="172"/>
        <end position="177"/>
    </location>
</feature>
<feature type="strand" evidence="2">
    <location>
        <begin position="181"/>
        <end position="192"/>
    </location>
</feature>
<feature type="turn" evidence="2">
    <location>
        <begin position="194"/>
        <end position="196"/>
    </location>
</feature>
<feature type="helix" evidence="2">
    <location>
        <begin position="198"/>
        <end position="203"/>
    </location>
</feature>
<feature type="strand" evidence="2">
    <location>
        <begin position="210"/>
        <end position="217"/>
    </location>
</feature>
<sequence>MKADFWLQRWSAGQIGFHQSEVNKDLQQYWSSLNVVPGARVLVPLCGKSQDMSWLSGQGYHVVGAELSEAAVERYFTERGEQPHITSQGDFKVYAAPGIEIWCGDFFALTARDIGHCAAFYDRAAMIALPADMRERYVQHLEALMPQACSGLLITLEYDQALLEGPPFSVPQTWLHRVMSGNWEVTKVGGQDTLHSSARGLKAGLERMDEHVYVLERV</sequence>
<reference key="1">
    <citation type="journal article" date="1998" name="Biochim. Biophys. Acta">
        <title>A tellurite-resistance genetic determinant from phytopathogenic pseudomonads encodes a thiopurine methyltransferase: evidence of a widely-conserved family of methyltransferases.</title>
        <authorList>
            <person name="Cournoyer B."/>
            <person name="Watanabe S."/>
            <person name="Vivian A."/>
        </authorList>
    </citation>
    <scope>NUCLEOTIDE SEQUENCE [GENOMIC DNA]</scope>
</reference>
<reference key="2">
    <citation type="journal article" date="2003" name="J. Mol. Biol.">
        <title>Tertiary structure of thiopurine methyltransferase from Pseudomonas syringae, a bacterial orthologue of a polymorphic, drug-metabolizing enzyme.</title>
        <authorList>
            <person name="Scheuermann T.H."/>
            <person name="Lolis E."/>
            <person name="Hodsdon M.E."/>
        </authorList>
    </citation>
    <scope>STRUCTURE BY NMR OF 18-218</scope>
</reference>